<gene>
    <name evidence="1" type="primary">SCARA5</name>
</gene>
<organism>
    <name type="scientific">Bos taurus</name>
    <name type="common">Bovine</name>
    <dbReference type="NCBI Taxonomy" id="9913"/>
    <lineage>
        <taxon>Eukaryota</taxon>
        <taxon>Metazoa</taxon>
        <taxon>Chordata</taxon>
        <taxon>Craniata</taxon>
        <taxon>Vertebrata</taxon>
        <taxon>Euteleostomi</taxon>
        <taxon>Mammalia</taxon>
        <taxon>Eutheria</taxon>
        <taxon>Laurasiatheria</taxon>
        <taxon>Artiodactyla</taxon>
        <taxon>Ruminantia</taxon>
        <taxon>Pecora</taxon>
        <taxon>Bovidae</taxon>
        <taxon>Bovinae</taxon>
        <taxon>Bos</taxon>
    </lineage>
</organism>
<sequence length="495" mass="53453">MENKAMYLHATVSDRDSSSIFEEPFDGRSLSKLNLCEDGPCHKGRAGGCCTQLGSLSALKHAVLGLYLLVFLILVGIFILAVSRPRSSPDDLKALTRNVNRLNESFRDLQLRLLQAPLQGELSEQVWKAHDALQNQSDSLLALAGAVQRLEGALWGLQAQAAQSEQAVVLLRERAAQQSDAAQLELYQLQVDSNRSQLLLRRHAGLLDGLARRVGALSDELADVGGALRGLNLSLSYDVALQGTRLRDLRVLVSNASEDARRLRLAHRGLELQLKQELAVLNGVTEDLRLKDWEHSIALRNITLAKGPPGPKGDPGDAGKEGEPGIPGLPGLRGLPGERGTPGLPGPKGDEGKLGATGPMGMRGFKGDRGPKGEKGEKGDRTVDASGVEAVMVRLVNGSGLHQGRVEVYHERRWGTVCDDGWDKKDGDVVCRMLGFPGAEDVHRTAQFGQGTGRIWMDDVACKGTEESIFRCSFSKWGVTNCGHAEDAGVTCKRH</sequence>
<name>SCAR5_BOVIN</name>
<accession>A5PJQ2</accession>
<proteinExistence type="evidence at transcript level"/>
<dbReference type="EMBL" id="BC142199">
    <property type="protein sequence ID" value="AAI42200.1"/>
    <property type="molecule type" value="mRNA"/>
</dbReference>
<dbReference type="RefSeq" id="NP_001095969.1">
    <property type="nucleotide sequence ID" value="NM_001102499.1"/>
</dbReference>
<dbReference type="SMR" id="A5PJQ2"/>
<dbReference type="FunCoup" id="A5PJQ2">
    <property type="interactions" value="117"/>
</dbReference>
<dbReference type="STRING" id="9913.ENSBTAP00000026158"/>
<dbReference type="GlyCosmos" id="A5PJQ2">
    <property type="glycosylation" value="7 sites, No reported glycans"/>
</dbReference>
<dbReference type="GlyGen" id="A5PJQ2">
    <property type="glycosylation" value="7 sites"/>
</dbReference>
<dbReference type="PaxDb" id="9913-ENSBTAP00000026158"/>
<dbReference type="Ensembl" id="ENSBTAT00000026158.6">
    <property type="protein sequence ID" value="ENSBTAP00000026158.5"/>
    <property type="gene ID" value="ENSBTAG00000019636.7"/>
</dbReference>
<dbReference type="GeneID" id="516087"/>
<dbReference type="KEGG" id="bta:516087"/>
<dbReference type="CTD" id="286133"/>
<dbReference type="VEuPathDB" id="HostDB:ENSBTAG00000019636"/>
<dbReference type="VGNC" id="VGNC:34323">
    <property type="gene designation" value="SCARA5"/>
</dbReference>
<dbReference type="eggNOG" id="ENOG502QSM1">
    <property type="taxonomic scope" value="Eukaryota"/>
</dbReference>
<dbReference type="GeneTree" id="ENSGT00950000183074"/>
<dbReference type="HOGENOM" id="CLU_041152_1_0_1"/>
<dbReference type="InParanoid" id="A5PJQ2"/>
<dbReference type="OMA" id="LCDEVST"/>
<dbReference type="OrthoDB" id="536948at2759"/>
<dbReference type="TreeFam" id="TF330855"/>
<dbReference type="Proteomes" id="UP000009136">
    <property type="component" value="Chromosome 8"/>
</dbReference>
<dbReference type="Bgee" id="ENSBTAG00000019636">
    <property type="expression patterns" value="Expressed in uterine horn and 101 other cell types or tissues"/>
</dbReference>
<dbReference type="GO" id="GO:0009986">
    <property type="term" value="C:cell surface"/>
    <property type="evidence" value="ECO:0007669"/>
    <property type="project" value="Ensembl"/>
</dbReference>
<dbReference type="GO" id="GO:0005886">
    <property type="term" value="C:plasma membrane"/>
    <property type="evidence" value="ECO:0000250"/>
    <property type="project" value="UniProtKB"/>
</dbReference>
<dbReference type="GO" id="GO:0070287">
    <property type="term" value="F:ferritin receptor activity"/>
    <property type="evidence" value="ECO:0000250"/>
    <property type="project" value="UniProtKB"/>
</dbReference>
<dbReference type="GO" id="GO:0034605">
    <property type="term" value="P:cellular response to heat"/>
    <property type="evidence" value="ECO:0007669"/>
    <property type="project" value="Ensembl"/>
</dbReference>
<dbReference type="GO" id="GO:0006897">
    <property type="term" value="P:endocytosis"/>
    <property type="evidence" value="ECO:0000250"/>
    <property type="project" value="UniProtKB"/>
</dbReference>
<dbReference type="GO" id="GO:0006879">
    <property type="term" value="P:intracellular iron ion homeostasis"/>
    <property type="evidence" value="ECO:0000250"/>
    <property type="project" value="UniProtKB"/>
</dbReference>
<dbReference type="GO" id="GO:0034755">
    <property type="term" value="P:iron ion transmembrane transport"/>
    <property type="evidence" value="ECO:0000250"/>
    <property type="project" value="UniProtKB"/>
</dbReference>
<dbReference type="GO" id="GO:0070207">
    <property type="term" value="P:protein homotrimerization"/>
    <property type="evidence" value="ECO:0000250"/>
    <property type="project" value="UniProtKB"/>
</dbReference>
<dbReference type="FunFam" id="3.10.250.10:FF:000011">
    <property type="entry name" value="Scavenger receptor class A member 5"/>
    <property type="match status" value="1"/>
</dbReference>
<dbReference type="Gene3D" id="3.10.250.10">
    <property type="entry name" value="SRCR-like domain"/>
    <property type="match status" value="1"/>
</dbReference>
<dbReference type="HAMAP" id="MF_03070">
    <property type="entry name" value="SCARA5"/>
    <property type="match status" value="1"/>
</dbReference>
<dbReference type="InterPro" id="IPR008160">
    <property type="entry name" value="Collagen"/>
</dbReference>
<dbReference type="InterPro" id="IPR034726">
    <property type="entry name" value="SCARA5"/>
</dbReference>
<dbReference type="InterPro" id="IPR001190">
    <property type="entry name" value="SRCR"/>
</dbReference>
<dbReference type="InterPro" id="IPR036772">
    <property type="entry name" value="SRCR-like_dom_sf"/>
</dbReference>
<dbReference type="PANTHER" id="PTHR48071:SF24">
    <property type="entry name" value="DELETED IN MALIGNANT BRAIN TUMORS 1 PROTEIN-LIKE"/>
    <property type="match status" value="1"/>
</dbReference>
<dbReference type="PANTHER" id="PTHR48071">
    <property type="entry name" value="SRCR DOMAIN-CONTAINING PROTEIN"/>
    <property type="match status" value="1"/>
</dbReference>
<dbReference type="Pfam" id="PF01391">
    <property type="entry name" value="Collagen"/>
    <property type="match status" value="2"/>
</dbReference>
<dbReference type="Pfam" id="PF00530">
    <property type="entry name" value="SRCR"/>
    <property type="match status" value="1"/>
</dbReference>
<dbReference type="PRINTS" id="PR00258">
    <property type="entry name" value="SPERACTRCPTR"/>
</dbReference>
<dbReference type="SMART" id="SM00202">
    <property type="entry name" value="SR"/>
    <property type="match status" value="1"/>
</dbReference>
<dbReference type="SUPFAM" id="SSF56487">
    <property type="entry name" value="SRCR-like"/>
    <property type="match status" value="1"/>
</dbReference>
<dbReference type="PROSITE" id="PS00420">
    <property type="entry name" value="SRCR_1"/>
    <property type="match status" value="1"/>
</dbReference>
<dbReference type="PROSITE" id="PS50287">
    <property type="entry name" value="SRCR_2"/>
    <property type="match status" value="1"/>
</dbReference>
<comment type="function">
    <text evidence="1">Ferritin receptor that mediates non-transferrin-dependent delivery of iron. Mediates cellular uptake of ferritin-bound iron by stimulating ferritin endocytosis from the cell surface with consequent iron delivery within the cell. Delivery of iron to cells by ferritin is required for the development of specific cell types, suggesting the existence of cell type-specific mechanisms of iron traffic in organogenesis, which alternatively utilize transferrin or non-transferrin iron delivery pathways. Ferritin mediates iron uptake in capsule cells of the developing kidney. Preferentially binds ferritin light chain (FTL) compared to heavy chain (FTH1).</text>
</comment>
<comment type="subunit">
    <text evidence="1">Homotrimer.</text>
</comment>
<comment type="subcellular location">
    <subcellularLocation>
        <location evidence="1">Cell membrane</location>
        <topology evidence="1">Single-pass type II membrane protein</topology>
    </subcellularLocation>
</comment>
<comment type="similarity">
    <text evidence="1">Belongs to the SCARA5 family.</text>
</comment>
<feature type="chain" id="PRO_0000367314" description="Scavenger receptor class A member 5">
    <location>
        <begin position="1"/>
        <end position="495"/>
    </location>
</feature>
<feature type="topological domain" description="Cytoplasmic" evidence="1">
    <location>
        <begin position="1"/>
        <end position="61"/>
    </location>
</feature>
<feature type="transmembrane region" description="Helical; Signal-anchor for type II membrane protein" evidence="1">
    <location>
        <begin position="62"/>
        <end position="82"/>
    </location>
</feature>
<feature type="topological domain" description="Extracellular" evidence="1">
    <location>
        <begin position="83"/>
        <end position="495"/>
    </location>
</feature>
<feature type="domain" description="Collagen-like" evidence="1">
    <location>
        <begin position="306"/>
        <end position="357"/>
    </location>
</feature>
<feature type="domain" description="SRCR" evidence="1">
    <location>
        <begin position="393"/>
        <end position="493"/>
    </location>
</feature>
<feature type="region of interest" description="Disordered" evidence="2">
    <location>
        <begin position="303"/>
        <end position="382"/>
    </location>
</feature>
<feature type="coiled-coil region" evidence="1">
    <location>
        <begin position="92"/>
        <end position="112"/>
    </location>
</feature>
<feature type="compositionally biased region" description="Basic and acidic residues" evidence="2">
    <location>
        <begin position="314"/>
        <end position="323"/>
    </location>
</feature>
<feature type="compositionally biased region" description="Low complexity" evidence="2">
    <location>
        <begin position="324"/>
        <end position="342"/>
    </location>
</feature>
<feature type="compositionally biased region" description="Basic and acidic residues" evidence="2">
    <location>
        <begin position="365"/>
        <end position="382"/>
    </location>
</feature>
<feature type="glycosylation site" description="N-linked (GlcNAc...) asparagine" evidence="1">
    <location>
        <position position="103"/>
    </location>
</feature>
<feature type="glycosylation site" description="N-linked (GlcNAc...) asparagine" evidence="1">
    <location>
        <position position="135"/>
    </location>
</feature>
<feature type="glycosylation site" description="N-linked (GlcNAc...) asparagine" evidence="1">
    <location>
        <position position="194"/>
    </location>
</feature>
<feature type="glycosylation site" description="N-linked (GlcNAc...) asparagine" evidence="1">
    <location>
        <position position="232"/>
    </location>
</feature>
<feature type="glycosylation site" description="N-linked (GlcNAc...) asparagine" evidence="1">
    <location>
        <position position="255"/>
    </location>
</feature>
<feature type="glycosylation site" description="N-linked (GlcNAc...) asparagine" evidence="1">
    <location>
        <position position="301"/>
    </location>
</feature>
<feature type="glycosylation site" description="N-linked (GlcNAc...) asparagine" evidence="1">
    <location>
        <position position="397"/>
    </location>
</feature>
<feature type="disulfide bond" evidence="1">
    <location>
        <begin position="418"/>
        <end position="482"/>
    </location>
</feature>
<feature type="disulfide bond" evidence="1">
    <location>
        <begin position="431"/>
        <end position="492"/>
    </location>
</feature>
<feature type="disulfide bond" evidence="1">
    <location>
        <begin position="462"/>
        <end position="472"/>
    </location>
</feature>
<evidence type="ECO:0000255" key="1">
    <source>
        <dbReference type="HAMAP-Rule" id="MF_03070"/>
    </source>
</evidence>
<evidence type="ECO:0000256" key="2">
    <source>
        <dbReference type="SAM" id="MobiDB-lite"/>
    </source>
</evidence>
<reference key="1">
    <citation type="submission" date="2007-06" db="EMBL/GenBank/DDBJ databases">
        <authorList>
            <consortium name="NIH - Mammalian Gene Collection (MGC) project"/>
        </authorList>
    </citation>
    <scope>NUCLEOTIDE SEQUENCE [LARGE SCALE MRNA]</scope>
    <source>
        <strain>Hereford</strain>
        <tissue>Ascending colon</tissue>
    </source>
</reference>
<keyword id="KW-1003">Cell membrane</keyword>
<keyword id="KW-0175">Coiled coil</keyword>
<keyword id="KW-1015">Disulfide bond</keyword>
<keyword id="KW-0325">Glycoprotein</keyword>
<keyword id="KW-0406">Ion transport</keyword>
<keyword id="KW-0408">Iron</keyword>
<keyword id="KW-0410">Iron transport</keyword>
<keyword id="KW-0472">Membrane</keyword>
<keyword id="KW-0675">Receptor</keyword>
<keyword id="KW-1185">Reference proteome</keyword>
<keyword id="KW-0735">Signal-anchor</keyword>
<keyword id="KW-0812">Transmembrane</keyword>
<keyword id="KW-1133">Transmembrane helix</keyword>
<keyword id="KW-0813">Transport</keyword>
<protein>
    <recommendedName>
        <fullName evidence="1">Scavenger receptor class A member 5</fullName>
    </recommendedName>
</protein>